<proteinExistence type="inferred from homology"/>
<name>MURC_LACLM</name>
<accession>A2RNJ0</accession>
<keyword id="KW-0067">ATP-binding</keyword>
<keyword id="KW-0131">Cell cycle</keyword>
<keyword id="KW-0132">Cell division</keyword>
<keyword id="KW-0133">Cell shape</keyword>
<keyword id="KW-0961">Cell wall biogenesis/degradation</keyword>
<keyword id="KW-0963">Cytoplasm</keyword>
<keyword id="KW-0436">Ligase</keyword>
<keyword id="KW-0547">Nucleotide-binding</keyword>
<keyword id="KW-0573">Peptidoglycan synthesis</keyword>
<sequence length="443" mass="49951">MEKTYHFTGIKGSGMSALALMLHQMGKNVQGSDSTDYFFTQRGLEQAGVPLLPFDEKNIKPEFELIVGNAFRDDNNVEIAFAHKNGFPFKRYHEFLGHFMEDFTSIGVAGAHGKTSTTGMLAHVMSNIVDTSYLIGDGTGRGNAGSEYFVFESDEYERHFMPYHPEYTIMTNIDFDHPDYFEGIEDVTSAFQDYANNIKKGIFAYGEDVNLRKLSAKAPIYYYGFEANDDYRAENLIRSTRGSSFDAYFRGEKIGHFVVPAYGKHNVLNALSVVAVCHNLGLDMTDVADHLLTFRGVKRRFTEKKVGETVIIDDFAHHPTEIEATLDAARQKYPDREIVAVFQPHTFTRTIAFADEFAEVLDHADTVYLAQIYGSAREVDHHEITAQDLADKVRKPAKVIELDNVSPLLDHDRGVYVFMGAGNIQKYEIAFEKLLSQTSTNLQ</sequence>
<protein>
    <recommendedName>
        <fullName evidence="1">UDP-N-acetylmuramate--L-alanine ligase</fullName>
        <ecNumber evidence="1">6.3.2.8</ecNumber>
    </recommendedName>
    <alternativeName>
        <fullName evidence="1">UDP-N-acetylmuramoyl-L-alanine synthetase</fullName>
    </alternativeName>
</protein>
<comment type="function">
    <text evidence="1">Cell wall formation.</text>
</comment>
<comment type="catalytic activity">
    <reaction evidence="1">
        <text>UDP-N-acetyl-alpha-D-muramate + L-alanine + ATP = UDP-N-acetyl-alpha-D-muramoyl-L-alanine + ADP + phosphate + H(+)</text>
        <dbReference type="Rhea" id="RHEA:23372"/>
        <dbReference type="ChEBI" id="CHEBI:15378"/>
        <dbReference type="ChEBI" id="CHEBI:30616"/>
        <dbReference type="ChEBI" id="CHEBI:43474"/>
        <dbReference type="ChEBI" id="CHEBI:57972"/>
        <dbReference type="ChEBI" id="CHEBI:70757"/>
        <dbReference type="ChEBI" id="CHEBI:83898"/>
        <dbReference type="ChEBI" id="CHEBI:456216"/>
        <dbReference type="EC" id="6.3.2.8"/>
    </reaction>
</comment>
<comment type="pathway">
    <text evidence="1">Cell wall biogenesis; peptidoglycan biosynthesis.</text>
</comment>
<comment type="subcellular location">
    <subcellularLocation>
        <location evidence="1">Cytoplasm</location>
    </subcellularLocation>
</comment>
<comment type="similarity">
    <text evidence="1">Belongs to the MurCDEF family.</text>
</comment>
<reference key="1">
    <citation type="journal article" date="2007" name="J. Bacteriol.">
        <title>The complete genome sequence of the lactic acid bacterial paradigm Lactococcus lactis subsp. cremoris MG1363.</title>
        <authorList>
            <person name="Wegmann U."/>
            <person name="O'Connell-Motherway M."/>
            <person name="Zomer A."/>
            <person name="Buist G."/>
            <person name="Shearman C."/>
            <person name="Canchaya C."/>
            <person name="Ventura M."/>
            <person name="Goesmann A."/>
            <person name="Gasson M.J."/>
            <person name="Kuipers O.P."/>
            <person name="van Sinderen D."/>
            <person name="Kok J."/>
        </authorList>
    </citation>
    <scope>NUCLEOTIDE SEQUENCE [LARGE SCALE GENOMIC DNA]</scope>
    <source>
        <strain>MG1363</strain>
    </source>
</reference>
<dbReference type="EC" id="6.3.2.8" evidence="1"/>
<dbReference type="EMBL" id="AM406671">
    <property type="protein sequence ID" value="CAL98880.1"/>
    <property type="molecule type" value="Genomic_DNA"/>
</dbReference>
<dbReference type="RefSeq" id="WP_011835988.1">
    <property type="nucleotide sequence ID" value="NC_009004.1"/>
</dbReference>
<dbReference type="SMR" id="A2RNJ0"/>
<dbReference type="STRING" id="416870.llmg_2316"/>
<dbReference type="GeneID" id="61110361"/>
<dbReference type="KEGG" id="llm:llmg_2316"/>
<dbReference type="eggNOG" id="COG0773">
    <property type="taxonomic scope" value="Bacteria"/>
</dbReference>
<dbReference type="HOGENOM" id="CLU_028104_1_0_9"/>
<dbReference type="OrthoDB" id="9804126at2"/>
<dbReference type="PhylomeDB" id="A2RNJ0"/>
<dbReference type="UniPathway" id="UPA00219"/>
<dbReference type="Proteomes" id="UP000000364">
    <property type="component" value="Chromosome"/>
</dbReference>
<dbReference type="GO" id="GO:0005737">
    <property type="term" value="C:cytoplasm"/>
    <property type="evidence" value="ECO:0007669"/>
    <property type="project" value="UniProtKB-SubCell"/>
</dbReference>
<dbReference type="GO" id="GO:0005524">
    <property type="term" value="F:ATP binding"/>
    <property type="evidence" value="ECO:0007669"/>
    <property type="project" value="UniProtKB-UniRule"/>
</dbReference>
<dbReference type="GO" id="GO:0008763">
    <property type="term" value="F:UDP-N-acetylmuramate-L-alanine ligase activity"/>
    <property type="evidence" value="ECO:0007669"/>
    <property type="project" value="UniProtKB-UniRule"/>
</dbReference>
<dbReference type="GO" id="GO:0051301">
    <property type="term" value="P:cell division"/>
    <property type="evidence" value="ECO:0007669"/>
    <property type="project" value="UniProtKB-KW"/>
</dbReference>
<dbReference type="GO" id="GO:0071555">
    <property type="term" value="P:cell wall organization"/>
    <property type="evidence" value="ECO:0007669"/>
    <property type="project" value="UniProtKB-KW"/>
</dbReference>
<dbReference type="GO" id="GO:0009252">
    <property type="term" value="P:peptidoglycan biosynthetic process"/>
    <property type="evidence" value="ECO:0007669"/>
    <property type="project" value="UniProtKB-UniRule"/>
</dbReference>
<dbReference type="GO" id="GO:0008360">
    <property type="term" value="P:regulation of cell shape"/>
    <property type="evidence" value="ECO:0007669"/>
    <property type="project" value="UniProtKB-KW"/>
</dbReference>
<dbReference type="Gene3D" id="3.90.190.20">
    <property type="entry name" value="Mur ligase, C-terminal domain"/>
    <property type="match status" value="1"/>
</dbReference>
<dbReference type="Gene3D" id="3.40.1190.10">
    <property type="entry name" value="Mur-like, catalytic domain"/>
    <property type="match status" value="1"/>
</dbReference>
<dbReference type="Gene3D" id="3.40.50.720">
    <property type="entry name" value="NAD(P)-binding Rossmann-like Domain"/>
    <property type="match status" value="1"/>
</dbReference>
<dbReference type="HAMAP" id="MF_00046">
    <property type="entry name" value="MurC"/>
    <property type="match status" value="1"/>
</dbReference>
<dbReference type="InterPro" id="IPR036565">
    <property type="entry name" value="Mur-like_cat_sf"/>
</dbReference>
<dbReference type="InterPro" id="IPR004101">
    <property type="entry name" value="Mur_ligase_C"/>
</dbReference>
<dbReference type="InterPro" id="IPR036615">
    <property type="entry name" value="Mur_ligase_C_dom_sf"/>
</dbReference>
<dbReference type="InterPro" id="IPR013221">
    <property type="entry name" value="Mur_ligase_cen"/>
</dbReference>
<dbReference type="InterPro" id="IPR000713">
    <property type="entry name" value="Mur_ligase_N"/>
</dbReference>
<dbReference type="InterPro" id="IPR050061">
    <property type="entry name" value="MurCDEF_pg_biosynth"/>
</dbReference>
<dbReference type="InterPro" id="IPR005758">
    <property type="entry name" value="UDP-N-AcMur_Ala_ligase_MurC"/>
</dbReference>
<dbReference type="NCBIfam" id="TIGR01082">
    <property type="entry name" value="murC"/>
    <property type="match status" value="1"/>
</dbReference>
<dbReference type="PANTHER" id="PTHR43445:SF3">
    <property type="entry name" value="UDP-N-ACETYLMURAMATE--L-ALANINE LIGASE"/>
    <property type="match status" value="1"/>
</dbReference>
<dbReference type="PANTHER" id="PTHR43445">
    <property type="entry name" value="UDP-N-ACETYLMURAMATE--L-ALANINE LIGASE-RELATED"/>
    <property type="match status" value="1"/>
</dbReference>
<dbReference type="Pfam" id="PF01225">
    <property type="entry name" value="Mur_ligase"/>
    <property type="match status" value="1"/>
</dbReference>
<dbReference type="Pfam" id="PF02875">
    <property type="entry name" value="Mur_ligase_C"/>
    <property type="match status" value="1"/>
</dbReference>
<dbReference type="Pfam" id="PF08245">
    <property type="entry name" value="Mur_ligase_M"/>
    <property type="match status" value="1"/>
</dbReference>
<dbReference type="SUPFAM" id="SSF51984">
    <property type="entry name" value="MurCD N-terminal domain"/>
    <property type="match status" value="1"/>
</dbReference>
<dbReference type="SUPFAM" id="SSF53623">
    <property type="entry name" value="MurD-like peptide ligases, catalytic domain"/>
    <property type="match status" value="1"/>
</dbReference>
<dbReference type="SUPFAM" id="SSF53244">
    <property type="entry name" value="MurD-like peptide ligases, peptide-binding domain"/>
    <property type="match status" value="1"/>
</dbReference>
<organism>
    <name type="scientific">Lactococcus lactis subsp. cremoris (strain MG1363)</name>
    <dbReference type="NCBI Taxonomy" id="416870"/>
    <lineage>
        <taxon>Bacteria</taxon>
        <taxon>Bacillati</taxon>
        <taxon>Bacillota</taxon>
        <taxon>Bacilli</taxon>
        <taxon>Lactobacillales</taxon>
        <taxon>Streptococcaceae</taxon>
        <taxon>Lactococcus</taxon>
        <taxon>Lactococcus cremoris subsp. cremoris</taxon>
    </lineage>
</organism>
<feature type="chain" id="PRO_1000004359" description="UDP-N-acetylmuramate--L-alanine ligase">
    <location>
        <begin position="1"/>
        <end position="443"/>
    </location>
</feature>
<feature type="binding site" evidence="1">
    <location>
        <begin position="110"/>
        <end position="116"/>
    </location>
    <ligand>
        <name>ATP</name>
        <dbReference type="ChEBI" id="CHEBI:30616"/>
    </ligand>
</feature>
<gene>
    <name evidence="1" type="primary">murC</name>
    <name type="ordered locus">llmg_2316</name>
</gene>
<evidence type="ECO:0000255" key="1">
    <source>
        <dbReference type="HAMAP-Rule" id="MF_00046"/>
    </source>
</evidence>